<comment type="function">
    <text evidence="3 4">Hydrolyzes the non-reducing end N-acetyl-D-hexosamine and/or sulfated N-acetyl-D-hexosamine of glycoconjugates, such as the oligosaccharide moieties from proteins and neutral glycolipids, or from certain mucopolysaccharides. The isozyme B does not hydrolyze each of these substrates, however hydrolyzes efficiently neutral oligosaccharide. Only the isozyme A is responsible for the degradation of GM2 gangliosides in the presence of GM2A (By similarity). During fertilization is responsible, at least in part, for the zona block to polyspermy. Present in the cortical granules of non-activated oocytes, is exocytosed during the cortical reaction in response to oocyte activation and inactivates the sperm galactosyltransferase-binding site, accounting for the block in sperm binding to the zona pellucida (By similarity).</text>
</comment>
<comment type="catalytic activity">
    <reaction evidence="3">
        <text>Hydrolysis of terminal non-reducing N-acetyl-D-hexosamine residues in N-acetyl-beta-D-hexosaminides.</text>
        <dbReference type="EC" id="3.2.1.52"/>
    </reaction>
</comment>
<comment type="catalytic activity">
    <reaction evidence="3">
        <text>N-acetyl-beta-D-galactosaminyl-(1-&gt;4)-beta-D-3-sulfogalactosyl-(1-&gt;4)-beta-D-glucosyl-(1&lt;-&gt;1')-ceramide + H2O = a beta-D-3-sulfogalactosyl-(1-&gt;4)-beta-D-glucosyl-(1&lt;-&gt;1')-ceramide + N-acetyl-beta-D-galactosamine</text>
        <dbReference type="Rhea" id="RHEA:48276"/>
        <dbReference type="ChEBI" id="CHEBI:15377"/>
        <dbReference type="ChEBI" id="CHEBI:28497"/>
        <dbReference type="ChEBI" id="CHEBI:90163"/>
        <dbReference type="ChEBI" id="CHEBI:90164"/>
    </reaction>
    <physiologicalReaction direction="left-to-right" evidence="3">
        <dbReference type="Rhea" id="RHEA:48277"/>
    </physiologicalReaction>
</comment>
<comment type="catalytic activity">
    <reaction evidence="3">
        <text>a ganglioside GM2 (d18:1(4E)) + H2O = a ganglioside GM3 (d18:1(4E)) + N-acetyl-beta-D-galactosamine</text>
        <dbReference type="Rhea" id="RHEA:47940"/>
        <dbReference type="ChEBI" id="CHEBI:15377"/>
        <dbReference type="ChEBI" id="CHEBI:28497"/>
        <dbReference type="ChEBI" id="CHEBI:60065"/>
        <dbReference type="ChEBI" id="CHEBI:71502"/>
    </reaction>
    <physiologicalReaction direction="left-to-right" evidence="3">
        <dbReference type="Rhea" id="RHEA:47941"/>
    </physiologicalReaction>
</comment>
<comment type="catalytic activity">
    <reaction evidence="3">
        <text>a ganglioside GM2 + H2O = a ganglioside GM3 + N-acetyl-beta-D-galactosamine</text>
        <dbReference type="Rhea" id="RHEA:47968"/>
        <dbReference type="ChEBI" id="CHEBI:15377"/>
        <dbReference type="ChEBI" id="CHEBI:28497"/>
        <dbReference type="ChEBI" id="CHEBI:79210"/>
        <dbReference type="ChEBI" id="CHEBI:79218"/>
    </reaction>
    <physiologicalReaction direction="left-to-right" evidence="3">
        <dbReference type="Rhea" id="RHEA:47969"/>
    </physiologicalReaction>
</comment>
<comment type="catalytic activity">
    <reaction evidence="3">
        <text>beta-D-GalNAc-(1-&gt;4)-alpha-L-IdoA-(1-&gt;3)-beta-D-GalNAc-4-sulfate-(1-&gt;4)-alpha-L-IdoA-(1-&gt;3)-D-GalNAc-4-sulfate + H2O = alpha-L-IdoA-(1-&gt;3)-beta-D-GalNAc-4-sulfate-(1-&gt;4)-alpha-L-IdoA-(1-&gt;3)-D-GalNAc-4-sulfate + N-acetyl-D-galactosamine</text>
        <dbReference type="Rhea" id="RHEA:64372"/>
        <dbReference type="ChEBI" id="CHEBI:15377"/>
        <dbReference type="ChEBI" id="CHEBI:28037"/>
        <dbReference type="ChEBI" id="CHEBI:152565"/>
        <dbReference type="ChEBI" id="CHEBI:152566"/>
    </reaction>
    <physiologicalReaction direction="left-to-right" evidence="3">
        <dbReference type="Rhea" id="RHEA:64373"/>
    </physiologicalReaction>
</comment>
<comment type="catalytic activity">
    <reaction evidence="3">
        <text>N-acetyl-beta-D-6-sulfogalactosaminyl-(1-&gt;4)-alpha-L-iduronyl-(1-&gt;3)-N-acetyl-D-6-sulfogalactosamine + H2O = alpha-L-iduronyl-(1-&gt;3)-N-acetyl-D-6-sulfogalactosamine + N-acetyl-D-6-sulfogalactosamine</text>
        <dbReference type="Rhea" id="RHEA:64384"/>
        <dbReference type="ChEBI" id="CHEBI:15377"/>
        <dbReference type="ChEBI" id="CHEBI:152567"/>
        <dbReference type="ChEBI" id="CHEBI:152568"/>
        <dbReference type="ChEBI" id="CHEBI:153064"/>
    </reaction>
    <physiologicalReaction direction="left-to-right" evidence="3">
        <dbReference type="Rhea" id="RHEA:64385"/>
    </physiologicalReaction>
</comment>
<comment type="activity regulation">
    <text evidence="3">Addition of GM2A stimulates the hydrolysis of sulfated glycosphingolipid SM2 and the ganglioside GM2.</text>
</comment>
<comment type="subunit">
    <text evidence="2 3">There are 3 forms of beta-hexosaminidase: hexosaminidase A is a heterodimer composed of one subunit alpha and one subunit beta (chain A and B); hexosaminidase B is a homodimer of two beta subunits (two chains A and B); hexosaminidase S is a homodimer of two alpha subunits (By similarity). The composition of the dimer (isozyme A versus isozyme S) has a significant effect on the substrate specificity of the alpha subunit active site (By similarity).</text>
</comment>
<comment type="subcellular location">
    <subcellularLocation>
        <location evidence="3">Lysosome</location>
    </subcellularLocation>
    <subcellularLocation>
        <location evidence="4">Cytoplasmic vesicle</location>
        <location evidence="4">Secretory vesicle</location>
        <location evidence="4">Cortical granule</location>
    </subcellularLocation>
</comment>
<comment type="disease">
    <text evidence="6">Defects in HEXB are responsible for Sandhoff disease (GM2-gangliosidosis type-II). This disorder is found in Korat cats (initially imported from Thailand).</text>
</comment>
<comment type="similarity">
    <text evidence="7">Belongs to the glycosyl hydrolase 20 family.</text>
</comment>
<comment type="sequence caution" evidence="7">
    <conflict type="frameshift">
        <sequence resource="EMBL-CDS" id="AAB30707"/>
    </conflict>
</comment>
<sequence>MRHRGLGLAALLALLAAVAPRSSAAAGAALWPMPLSVKTSPRLLHLSRDNFSIGYGPSSTAGPTCSLLQEAFRRYHEYIFGFDKRQRRPAKPNSAIELQQLLVTVVLDSECDLFPNITSDESYTLLVKEPVAFLKANRVWGVLRGLETFSQLIYQDSYGTFTVNESDIIDSPRFPHRGILIDTARHFLPVKSILKTLDAMAFNKFNVLHWHIVDDQSFPYQSVTFPELSNKGSYSLSHVYTPNDVHTVIEYARLRGIRVIPEFDSPGHTQSWGKGQKDLLTPCYNEHKQSGTFGPINPILNSTYNFLSQFFKEVSMVFPDHFVHLGGDEVEFQCWESNPEIQGFMKQKGFGKDFRRLESFYLQKLLGIVSTVKKGSIVWQEVFDDHVKLLPGTIVQVWKNQVYTEELREVTAAGFPVILSAPWYLDWISYGQDWRNYYKVDPLHFDGSQEQKKLVIGGEACLWGEFVDATNLTPRLWPRASAVGERLWSPEDITSVGNAYNRLTVHRCRMVRRGISAEPLFTGYCDYEYKT</sequence>
<keyword id="KW-0968">Cytoplasmic vesicle</keyword>
<keyword id="KW-1015">Disulfide bond</keyword>
<keyword id="KW-0325">Glycoprotein</keyword>
<keyword id="KW-0326">Glycosidase</keyword>
<keyword id="KW-0378">Hydrolase</keyword>
<keyword id="KW-0443">Lipid metabolism</keyword>
<keyword id="KW-0458">Lysosome</keyword>
<keyword id="KW-1185">Reference proteome</keyword>
<keyword id="KW-0732">Signal</keyword>
<organism>
    <name type="scientific">Felis catus</name>
    <name type="common">Cat</name>
    <name type="synonym">Felis silvestris catus</name>
    <dbReference type="NCBI Taxonomy" id="9685"/>
    <lineage>
        <taxon>Eukaryota</taxon>
        <taxon>Metazoa</taxon>
        <taxon>Chordata</taxon>
        <taxon>Craniata</taxon>
        <taxon>Vertebrata</taxon>
        <taxon>Euteleostomi</taxon>
        <taxon>Mammalia</taxon>
        <taxon>Eutheria</taxon>
        <taxon>Laurasiatheria</taxon>
        <taxon>Carnivora</taxon>
        <taxon>Feliformia</taxon>
        <taxon>Felidae</taxon>
        <taxon>Felinae</taxon>
        <taxon>Felis</taxon>
    </lineage>
</organism>
<evidence type="ECO:0000250" key="1"/>
<evidence type="ECO:0000250" key="2">
    <source>
        <dbReference type="UniProtKB" id="P06865"/>
    </source>
</evidence>
<evidence type="ECO:0000250" key="3">
    <source>
        <dbReference type="UniProtKB" id="P07686"/>
    </source>
</evidence>
<evidence type="ECO:0000250" key="4">
    <source>
        <dbReference type="UniProtKB" id="P20060"/>
    </source>
</evidence>
<evidence type="ECO:0000255" key="5"/>
<evidence type="ECO:0000269" key="6">
    <source>
    </source>
</evidence>
<evidence type="ECO:0000305" key="7"/>
<feature type="signal peptide" evidence="5">
    <location>
        <begin position="1"/>
        <end position="24"/>
    </location>
</feature>
<feature type="chain" id="PRO_0000012001" description="Beta-hexosaminidase subunit beta">
    <location>
        <begin position="25"/>
        <end position="531"/>
    </location>
</feature>
<feature type="active site" description="Proton donor" evidence="1">
    <location>
        <position position="329"/>
    </location>
</feature>
<feature type="glycosylation site" description="N-linked (GlcNAc...) asparagine" evidence="5">
    <location>
        <position position="50"/>
    </location>
</feature>
<feature type="glycosylation site" description="N-linked (GlcNAc...) asparagine" evidence="5">
    <location>
        <position position="116"/>
    </location>
</feature>
<feature type="glycosylation site" description="N-linked (GlcNAc...) asparagine" evidence="5">
    <location>
        <position position="164"/>
    </location>
</feature>
<feature type="glycosylation site" description="N-linked (GlcNAc...) asparagine" evidence="5">
    <location>
        <position position="301"/>
    </location>
</feature>
<feature type="disulfide bond" evidence="1">
    <location>
        <begin position="65"/>
        <end position="111"/>
    </location>
</feature>
<feature type="disulfide bond" evidence="1">
    <location>
        <begin position="283"/>
        <end position="334"/>
    </location>
</feature>
<feature type="disulfide bond" evidence="1">
    <location>
        <begin position="508"/>
        <end position="525"/>
    </location>
</feature>
<protein>
    <recommendedName>
        <fullName evidence="3">Beta-hexosaminidase subunit beta</fullName>
        <ecNumber evidence="3">3.2.1.52</ecNumber>
    </recommendedName>
    <alternativeName>
        <fullName>Beta-N-acetylhexosaminidase subunit beta</fullName>
        <shortName>Hexosaminidase subunit B</shortName>
    </alternativeName>
    <alternativeName>
        <fullName>N-acetyl-beta-glucosaminidase subunit beta</fullName>
    </alternativeName>
</protein>
<name>HEXB_FELCA</name>
<accession>P49614</accession>
<proteinExistence type="evidence at transcript level"/>
<reference key="1">
    <citation type="journal article" date="1994" name="Am. J. Pathol.">
        <title>Characterization of the molecular defect in a feline model for type II GM2-gangliosidosis (Sandhoff disease).</title>
        <authorList>
            <person name="Muldoon L.L."/>
            <person name="Neuwelt E.A."/>
            <person name="Pagel M.A."/>
            <person name="Weiss D.L."/>
        </authorList>
    </citation>
    <scope>NUCLEOTIDE SEQUENCE [MRNA]</scope>
    <scope>DISEASE</scope>
    <source>
        <strain>Korat</strain>
        <tissue>Liver</tissue>
    </source>
</reference>
<gene>
    <name evidence="3" type="primary">HEXB</name>
</gene>
<dbReference type="EC" id="3.2.1.52" evidence="3"/>
<dbReference type="EMBL" id="S70340">
    <property type="protein sequence ID" value="AAB30707.2"/>
    <property type="status" value="ALT_FRAME"/>
    <property type="molecule type" value="mRNA"/>
</dbReference>
<dbReference type="RefSeq" id="NP_001009333.2">
    <property type="nucleotide sequence ID" value="NM_001009333.2"/>
</dbReference>
<dbReference type="SMR" id="P49614"/>
<dbReference type="STRING" id="9685.ENSFCAP00000016100"/>
<dbReference type="CAZy" id="GH20">
    <property type="family name" value="Glycoside Hydrolase Family 20"/>
</dbReference>
<dbReference type="GlyCosmos" id="P49614">
    <property type="glycosylation" value="4 sites, No reported glycans"/>
</dbReference>
<dbReference type="PaxDb" id="9685-ENSFCAP00000016100"/>
<dbReference type="GeneID" id="493928"/>
<dbReference type="KEGG" id="fca:493928"/>
<dbReference type="CTD" id="3074"/>
<dbReference type="eggNOG" id="KOG2499">
    <property type="taxonomic scope" value="Eukaryota"/>
</dbReference>
<dbReference type="HOGENOM" id="CLU_007082_0_0_1"/>
<dbReference type="InParanoid" id="P49614"/>
<dbReference type="OrthoDB" id="428480at2759"/>
<dbReference type="BRENDA" id="3.2.1.52">
    <property type="organism ID" value="2235"/>
</dbReference>
<dbReference type="Proteomes" id="UP000011712">
    <property type="component" value="Unplaced"/>
</dbReference>
<dbReference type="GO" id="GO:0060473">
    <property type="term" value="C:cortical granule"/>
    <property type="evidence" value="ECO:0000250"/>
    <property type="project" value="UniProtKB"/>
</dbReference>
<dbReference type="GO" id="GO:0005764">
    <property type="term" value="C:lysosome"/>
    <property type="evidence" value="ECO:0000318"/>
    <property type="project" value="GO_Central"/>
</dbReference>
<dbReference type="GO" id="GO:0016020">
    <property type="term" value="C:membrane"/>
    <property type="evidence" value="ECO:0000318"/>
    <property type="project" value="GO_Central"/>
</dbReference>
<dbReference type="GO" id="GO:0004563">
    <property type="term" value="F:beta-N-acetylhexosaminidase activity"/>
    <property type="evidence" value="ECO:0000250"/>
    <property type="project" value="UniProtKB"/>
</dbReference>
<dbReference type="GO" id="GO:0005975">
    <property type="term" value="P:carbohydrate metabolic process"/>
    <property type="evidence" value="ECO:0007669"/>
    <property type="project" value="InterPro"/>
</dbReference>
<dbReference type="GO" id="GO:0006689">
    <property type="term" value="P:ganglioside catabolic process"/>
    <property type="evidence" value="ECO:0000250"/>
    <property type="project" value="UniProtKB"/>
</dbReference>
<dbReference type="GO" id="GO:0030203">
    <property type="term" value="P:glycosaminoglycan metabolic process"/>
    <property type="evidence" value="ECO:0000318"/>
    <property type="project" value="GO_Central"/>
</dbReference>
<dbReference type="GO" id="GO:0006491">
    <property type="term" value="P:N-glycan processing"/>
    <property type="evidence" value="ECO:0000318"/>
    <property type="project" value="GO_Central"/>
</dbReference>
<dbReference type="GO" id="GO:0007338">
    <property type="term" value="P:single fertilization"/>
    <property type="evidence" value="ECO:0000250"/>
    <property type="project" value="UniProtKB"/>
</dbReference>
<dbReference type="CDD" id="cd06562">
    <property type="entry name" value="GH20_HexA_HexB-like"/>
    <property type="match status" value="1"/>
</dbReference>
<dbReference type="FunFam" id="3.20.20.80:FF:000049">
    <property type="entry name" value="Beta-hexosaminidase A"/>
    <property type="match status" value="1"/>
</dbReference>
<dbReference type="Gene3D" id="3.30.379.10">
    <property type="entry name" value="Chitobiase/beta-hexosaminidase domain 2-like"/>
    <property type="match status" value="1"/>
</dbReference>
<dbReference type="Gene3D" id="3.20.20.80">
    <property type="entry name" value="Glycosidases"/>
    <property type="match status" value="1"/>
</dbReference>
<dbReference type="InterPro" id="IPR025705">
    <property type="entry name" value="Beta_hexosaminidase_sua/sub"/>
</dbReference>
<dbReference type="InterPro" id="IPR015883">
    <property type="entry name" value="Glyco_hydro_20_cat"/>
</dbReference>
<dbReference type="InterPro" id="IPR017853">
    <property type="entry name" value="Glycoside_hydrolase_SF"/>
</dbReference>
<dbReference type="InterPro" id="IPR029018">
    <property type="entry name" value="Hex-like_dom2"/>
</dbReference>
<dbReference type="InterPro" id="IPR029019">
    <property type="entry name" value="HEX_eukaryotic_N"/>
</dbReference>
<dbReference type="PANTHER" id="PTHR22600">
    <property type="entry name" value="BETA-HEXOSAMINIDASE"/>
    <property type="match status" value="1"/>
</dbReference>
<dbReference type="PANTHER" id="PTHR22600:SF38">
    <property type="entry name" value="BETA-HEXOSAMINIDASE SUBUNIT BETA"/>
    <property type="match status" value="1"/>
</dbReference>
<dbReference type="Pfam" id="PF00728">
    <property type="entry name" value="Glyco_hydro_20"/>
    <property type="match status" value="1"/>
</dbReference>
<dbReference type="Pfam" id="PF14845">
    <property type="entry name" value="Glycohydro_20b2"/>
    <property type="match status" value="1"/>
</dbReference>
<dbReference type="PIRSF" id="PIRSF001093">
    <property type="entry name" value="B-hxosamndse_ab_euk"/>
    <property type="match status" value="1"/>
</dbReference>
<dbReference type="PRINTS" id="PR00738">
    <property type="entry name" value="GLHYDRLASE20"/>
</dbReference>
<dbReference type="SUPFAM" id="SSF51445">
    <property type="entry name" value="(Trans)glycosidases"/>
    <property type="match status" value="1"/>
</dbReference>
<dbReference type="SUPFAM" id="SSF55545">
    <property type="entry name" value="beta-N-acetylhexosaminidase-like domain"/>
    <property type="match status" value="1"/>
</dbReference>